<sequence>MADEEISKAFRDLQFKTNETRMRIVQGEQNKKVNYQKMRISESTKKNLVDLDENLKYYRSVGRMFLLTDKPAEISRHEAEAKQSKEKIEAIEKQKDYLEKGLVEAETNLRELIQSRR</sequence>
<keyword id="KW-0025">Alternative splicing</keyword>
<keyword id="KW-0143">Chaperone</keyword>
<keyword id="KW-0963">Cytoplasm</keyword>
<keyword id="KW-1185">Reference proteome</keyword>
<dbReference type="EMBL" id="Z73103">
    <property type="protein sequence ID" value="CAA97424.1"/>
    <property type="molecule type" value="Genomic_DNA"/>
</dbReference>
<dbReference type="EMBL" id="Z73103">
    <property type="protein sequence ID" value="CBZ01774.1"/>
    <property type="molecule type" value="Genomic_DNA"/>
</dbReference>
<dbReference type="PIR" id="T19098">
    <property type="entry name" value="T19098"/>
</dbReference>
<dbReference type="RefSeq" id="NP_001255540.1">
    <molecule id="Q17827-1"/>
    <property type="nucleotide sequence ID" value="NM_001268611.4"/>
</dbReference>
<dbReference type="RefSeq" id="NP_001255541.1">
    <molecule id="Q17827-2"/>
    <property type="nucleotide sequence ID" value="NM_001268612.4"/>
</dbReference>
<dbReference type="SMR" id="Q17827"/>
<dbReference type="BioGRID" id="43120">
    <property type="interactions" value="7"/>
</dbReference>
<dbReference type="FunCoup" id="Q17827">
    <property type="interactions" value="2494"/>
</dbReference>
<dbReference type="STRING" id="6239.C08F8.1a.1"/>
<dbReference type="PaxDb" id="6239-C08F8.1a"/>
<dbReference type="PeptideAtlas" id="Q17827"/>
<dbReference type="EnsemblMetazoa" id="C08F8.1a.1">
    <molecule id="Q17827-1"/>
    <property type="protein sequence ID" value="C08F8.1a.1"/>
    <property type="gene ID" value="WBGene00007443"/>
</dbReference>
<dbReference type="EnsemblMetazoa" id="C08F8.1b.1">
    <molecule id="Q17827-2"/>
    <property type="protein sequence ID" value="C08F8.1b.1"/>
    <property type="gene ID" value="WBGene00007443"/>
</dbReference>
<dbReference type="GeneID" id="178021"/>
<dbReference type="KEGG" id="cel:CELE_C08F8.1"/>
<dbReference type="AGR" id="WB:WBGene00007443"/>
<dbReference type="CTD" id="178021"/>
<dbReference type="WormBase" id="C08F8.1a">
    <molecule id="Q17827-1"/>
    <property type="protein sequence ID" value="CE05248"/>
    <property type="gene ID" value="WBGene00007443"/>
    <property type="gene designation" value="pfd-1"/>
</dbReference>
<dbReference type="WormBase" id="C08F8.1b">
    <molecule id="Q17827-2"/>
    <property type="protein sequence ID" value="CE45776"/>
    <property type="gene ID" value="WBGene00007443"/>
    <property type="gene designation" value="pfd-1"/>
</dbReference>
<dbReference type="eggNOG" id="KOG3501">
    <property type="taxonomic scope" value="Eukaryota"/>
</dbReference>
<dbReference type="GeneTree" id="ENSGT00390000009786"/>
<dbReference type="HOGENOM" id="CLU_122140_2_1_1"/>
<dbReference type="InParanoid" id="Q17827"/>
<dbReference type="OMA" id="QKMRISE"/>
<dbReference type="OrthoDB" id="5242628at2759"/>
<dbReference type="PhylomeDB" id="Q17827"/>
<dbReference type="PRO" id="PR:Q17827"/>
<dbReference type="Proteomes" id="UP000001940">
    <property type="component" value="Chromosome IV"/>
</dbReference>
<dbReference type="Bgee" id="WBGene00007443">
    <property type="expression patterns" value="Expressed in pharyngeal muscle cell (C elegans) and 4 other cell types or tissues"/>
</dbReference>
<dbReference type="GO" id="GO:0005737">
    <property type="term" value="C:cytoplasm"/>
    <property type="evidence" value="ECO:0000314"/>
    <property type="project" value="UniProtKB"/>
</dbReference>
<dbReference type="GO" id="GO:0016272">
    <property type="term" value="C:prefoldin complex"/>
    <property type="evidence" value="ECO:0007669"/>
    <property type="project" value="InterPro"/>
</dbReference>
<dbReference type="GO" id="GO:0044183">
    <property type="term" value="F:protein folding chaperone"/>
    <property type="evidence" value="ECO:0000318"/>
    <property type="project" value="GO_Central"/>
</dbReference>
<dbReference type="GO" id="GO:0051082">
    <property type="term" value="F:unfolded protein binding"/>
    <property type="evidence" value="ECO:0000318"/>
    <property type="project" value="GO_Central"/>
</dbReference>
<dbReference type="GO" id="GO:0008406">
    <property type="term" value="P:gonad development"/>
    <property type="evidence" value="ECO:0000315"/>
    <property type="project" value="UniProtKB"/>
</dbReference>
<dbReference type="GO" id="GO:0006457">
    <property type="term" value="P:protein folding"/>
    <property type="evidence" value="ECO:0000318"/>
    <property type="project" value="GO_Central"/>
</dbReference>
<dbReference type="FunFam" id="1.10.287.370:FF:000035">
    <property type="entry name" value="Probable prefoldin subunit 1"/>
    <property type="match status" value="1"/>
</dbReference>
<dbReference type="Gene3D" id="1.10.287.370">
    <property type="match status" value="1"/>
</dbReference>
<dbReference type="InterPro" id="IPR002777">
    <property type="entry name" value="PFD_beta-like"/>
</dbReference>
<dbReference type="InterPro" id="IPR009053">
    <property type="entry name" value="Prefoldin"/>
</dbReference>
<dbReference type="PANTHER" id="PTHR20903:SF0">
    <property type="entry name" value="PREFOLDIN SUBUNIT 1"/>
    <property type="match status" value="1"/>
</dbReference>
<dbReference type="PANTHER" id="PTHR20903">
    <property type="entry name" value="PREFOLDIN SUBUNIT 1-RELATED"/>
    <property type="match status" value="1"/>
</dbReference>
<dbReference type="Pfam" id="PF01920">
    <property type="entry name" value="Prefoldin_2"/>
    <property type="match status" value="1"/>
</dbReference>
<dbReference type="SUPFAM" id="SSF46579">
    <property type="entry name" value="Prefoldin"/>
    <property type="match status" value="1"/>
</dbReference>
<gene>
    <name type="primary">pfd-1</name>
    <name type="ORF">C08F8.1</name>
</gene>
<name>PFD1_CAEEL</name>
<accession>Q17827</accession>
<accession>E9P871</accession>
<feature type="chain" id="PRO_0000124832" description="Probable prefoldin subunit 1">
    <location>
        <begin position="1"/>
        <end position="117"/>
    </location>
</feature>
<feature type="splice variant" id="VSP_044042" description="In isoform b." evidence="3">
    <location>
        <begin position="1"/>
        <end position="37"/>
    </location>
</feature>
<comment type="function">
    <text evidence="1 2">Binds specifically to cytosolic chaperonin (c-CPN) and transfers target proteins to it. Binds to nascent polypeptide chain and promotes folding in an environment in which there are many competing pathways for nonnative proteins (By similarity). Has a role in gonadogenesis.</text>
</comment>
<comment type="subunit">
    <text evidence="1">Heterohexamer of two PFD-alpha type and four PFD-beta type subunits.</text>
</comment>
<comment type="subcellular location">
    <subcellularLocation>
        <location evidence="2">Cytoplasm</location>
    </subcellularLocation>
</comment>
<comment type="alternative products">
    <event type="alternative splicing"/>
    <isoform>
        <id>Q17827-1</id>
        <name>a</name>
        <sequence type="displayed"/>
    </isoform>
    <isoform>
        <id>Q17827-2</id>
        <name>b</name>
        <sequence type="described" ref="VSP_044042"/>
    </isoform>
</comment>
<comment type="tissue specificity">
    <text evidence="2">Expressed in the distal cell tip of developing embryos.</text>
</comment>
<comment type="disruption phenotype">
    <text evidence="2">Worms exhibit defects in distal cell tip migration during gonadogenesis, reduced microtubule growth rate in embryos, and larvae arrest and lethality.</text>
</comment>
<comment type="similarity">
    <text evidence="3">Belongs to the prefoldin subunit beta family.</text>
</comment>
<proteinExistence type="evidence at transcript level"/>
<protein>
    <recommendedName>
        <fullName>Probable prefoldin subunit 1</fullName>
    </recommendedName>
</protein>
<reference key="1">
    <citation type="journal article" date="1998" name="Science">
        <title>Genome sequence of the nematode C. elegans: a platform for investigating biology.</title>
        <authorList>
            <consortium name="The C. elegans sequencing consortium"/>
        </authorList>
    </citation>
    <scope>NUCLEOTIDE SEQUENCE [LARGE SCALE GENOMIC DNA]</scope>
    <scope>ALTERNATIVE SPLICING</scope>
    <source>
        <strain>Bristol N2</strain>
    </source>
</reference>
<reference key="2">
    <citation type="journal article" date="2008" name="Dev. Biol.">
        <title>Efficient chaperone-mediated tubulin biogenesis is essential for cell division and cell migration in C. elegans.</title>
        <authorList>
            <person name="Lundin V.F."/>
            <person name="Srayko M."/>
            <person name="Hyman A.A."/>
            <person name="Leroux M.R."/>
        </authorList>
    </citation>
    <scope>FUNCTION</scope>
    <scope>SUBCELLULAR LOCATION</scope>
    <scope>TISSUE SPECIFICITY</scope>
    <scope>DISRUPTION PHENOTYPE</scope>
    <source>
        <strain>VC1013</strain>
    </source>
</reference>
<evidence type="ECO:0000250" key="1"/>
<evidence type="ECO:0000269" key="2">
    <source>
    </source>
</evidence>
<evidence type="ECO:0000305" key="3"/>
<organism>
    <name type="scientific">Caenorhabditis elegans</name>
    <dbReference type="NCBI Taxonomy" id="6239"/>
    <lineage>
        <taxon>Eukaryota</taxon>
        <taxon>Metazoa</taxon>
        <taxon>Ecdysozoa</taxon>
        <taxon>Nematoda</taxon>
        <taxon>Chromadorea</taxon>
        <taxon>Rhabditida</taxon>
        <taxon>Rhabditina</taxon>
        <taxon>Rhabditomorpha</taxon>
        <taxon>Rhabditoidea</taxon>
        <taxon>Rhabditidae</taxon>
        <taxon>Peloderinae</taxon>
        <taxon>Caenorhabditis</taxon>
    </lineage>
</organism>